<comment type="function">
    <text evidence="1">Produces ATP from ADP in the presence of a proton gradient across the membrane. The catalytic sites are hosted primarily by the beta subunits.</text>
</comment>
<comment type="catalytic activity">
    <reaction evidence="1">
        <text>ATP + H2O + 4 H(+)(in) = ADP + phosphate + 5 H(+)(out)</text>
        <dbReference type="Rhea" id="RHEA:57720"/>
        <dbReference type="ChEBI" id="CHEBI:15377"/>
        <dbReference type="ChEBI" id="CHEBI:15378"/>
        <dbReference type="ChEBI" id="CHEBI:30616"/>
        <dbReference type="ChEBI" id="CHEBI:43474"/>
        <dbReference type="ChEBI" id="CHEBI:456216"/>
        <dbReference type="EC" id="7.1.2.2"/>
    </reaction>
</comment>
<comment type="subunit">
    <text evidence="1">F-type ATPases have 2 components, CF(1) - the catalytic core - and CF(0) - the membrane proton channel. CF(1) has five subunits: alpha(3), beta(3), gamma(1), delta(1), epsilon(1). CF(0) has three main subunits: a(1), b(2) and c(9-12). The alpha and beta chains form an alternating ring which encloses part of the gamma chain. CF(1) is attached to CF(0) by a central stalk formed by the gamma and epsilon chains, while a peripheral stalk is formed by the delta and b chains.</text>
</comment>
<comment type="subcellular location">
    <subcellularLocation>
        <location evidence="1">Cell inner membrane</location>
        <topology evidence="1">Peripheral membrane protein</topology>
    </subcellularLocation>
</comment>
<comment type="similarity">
    <text evidence="1">Belongs to the ATPase alpha/beta chains family.</text>
</comment>
<gene>
    <name evidence="1" type="primary">atpD</name>
    <name type="ordered locus">XF_1143</name>
</gene>
<proteinExistence type="inferred from homology"/>
<dbReference type="EC" id="7.1.2.2" evidence="1"/>
<dbReference type="EMBL" id="AE003849">
    <property type="protein sequence ID" value="AAF83953.1"/>
    <property type="molecule type" value="Genomic_DNA"/>
</dbReference>
<dbReference type="PIR" id="G82715">
    <property type="entry name" value="G82715"/>
</dbReference>
<dbReference type="RefSeq" id="WP_010893660.1">
    <property type="nucleotide sequence ID" value="NC_002488.3"/>
</dbReference>
<dbReference type="SMR" id="Q9PE85"/>
<dbReference type="STRING" id="160492.XF_1143"/>
<dbReference type="KEGG" id="xfa:XF_1143"/>
<dbReference type="eggNOG" id="COG0055">
    <property type="taxonomic scope" value="Bacteria"/>
</dbReference>
<dbReference type="HOGENOM" id="CLU_022398_0_2_6"/>
<dbReference type="Proteomes" id="UP000000812">
    <property type="component" value="Chromosome"/>
</dbReference>
<dbReference type="GO" id="GO:0005886">
    <property type="term" value="C:plasma membrane"/>
    <property type="evidence" value="ECO:0007669"/>
    <property type="project" value="UniProtKB-SubCell"/>
</dbReference>
<dbReference type="GO" id="GO:0045259">
    <property type="term" value="C:proton-transporting ATP synthase complex"/>
    <property type="evidence" value="ECO:0007669"/>
    <property type="project" value="UniProtKB-KW"/>
</dbReference>
<dbReference type="GO" id="GO:0005524">
    <property type="term" value="F:ATP binding"/>
    <property type="evidence" value="ECO:0007669"/>
    <property type="project" value="UniProtKB-UniRule"/>
</dbReference>
<dbReference type="GO" id="GO:0016887">
    <property type="term" value="F:ATP hydrolysis activity"/>
    <property type="evidence" value="ECO:0007669"/>
    <property type="project" value="InterPro"/>
</dbReference>
<dbReference type="GO" id="GO:0046933">
    <property type="term" value="F:proton-transporting ATP synthase activity, rotational mechanism"/>
    <property type="evidence" value="ECO:0007669"/>
    <property type="project" value="UniProtKB-UniRule"/>
</dbReference>
<dbReference type="CDD" id="cd18110">
    <property type="entry name" value="ATP-synt_F1_beta_C"/>
    <property type="match status" value="1"/>
</dbReference>
<dbReference type="CDD" id="cd18115">
    <property type="entry name" value="ATP-synt_F1_beta_N"/>
    <property type="match status" value="1"/>
</dbReference>
<dbReference type="CDD" id="cd01133">
    <property type="entry name" value="F1-ATPase_beta_CD"/>
    <property type="match status" value="1"/>
</dbReference>
<dbReference type="FunFam" id="1.10.1140.10:FF:000001">
    <property type="entry name" value="ATP synthase subunit beta"/>
    <property type="match status" value="1"/>
</dbReference>
<dbReference type="FunFam" id="3.40.50.300:FF:000004">
    <property type="entry name" value="ATP synthase subunit beta"/>
    <property type="match status" value="1"/>
</dbReference>
<dbReference type="Gene3D" id="2.40.10.170">
    <property type="match status" value="1"/>
</dbReference>
<dbReference type="Gene3D" id="1.10.1140.10">
    <property type="entry name" value="Bovine Mitochondrial F1-atpase, Atp Synthase Beta Chain, Chain D, domain 3"/>
    <property type="match status" value="1"/>
</dbReference>
<dbReference type="Gene3D" id="3.40.50.300">
    <property type="entry name" value="P-loop containing nucleotide triphosphate hydrolases"/>
    <property type="match status" value="1"/>
</dbReference>
<dbReference type="HAMAP" id="MF_01347">
    <property type="entry name" value="ATP_synth_beta_bact"/>
    <property type="match status" value="1"/>
</dbReference>
<dbReference type="InterPro" id="IPR003593">
    <property type="entry name" value="AAA+_ATPase"/>
</dbReference>
<dbReference type="InterPro" id="IPR055190">
    <property type="entry name" value="ATP-synt_VA_C"/>
</dbReference>
<dbReference type="InterPro" id="IPR005722">
    <property type="entry name" value="ATP_synth_F1_bsu"/>
</dbReference>
<dbReference type="InterPro" id="IPR020003">
    <property type="entry name" value="ATPase_a/bsu_AS"/>
</dbReference>
<dbReference type="InterPro" id="IPR050053">
    <property type="entry name" value="ATPase_alpha/beta_chains"/>
</dbReference>
<dbReference type="InterPro" id="IPR004100">
    <property type="entry name" value="ATPase_F1/V1/A1_a/bsu_N"/>
</dbReference>
<dbReference type="InterPro" id="IPR036121">
    <property type="entry name" value="ATPase_F1/V1/A1_a/bsu_N_sf"/>
</dbReference>
<dbReference type="InterPro" id="IPR000194">
    <property type="entry name" value="ATPase_F1/V1/A1_a/bsu_nucl-bd"/>
</dbReference>
<dbReference type="InterPro" id="IPR024034">
    <property type="entry name" value="ATPase_F1/V1_b/a_C"/>
</dbReference>
<dbReference type="InterPro" id="IPR027417">
    <property type="entry name" value="P-loop_NTPase"/>
</dbReference>
<dbReference type="NCBIfam" id="TIGR01039">
    <property type="entry name" value="atpD"/>
    <property type="match status" value="1"/>
</dbReference>
<dbReference type="PANTHER" id="PTHR15184">
    <property type="entry name" value="ATP SYNTHASE"/>
    <property type="match status" value="1"/>
</dbReference>
<dbReference type="PANTHER" id="PTHR15184:SF71">
    <property type="entry name" value="ATP SYNTHASE SUBUNIT BETA, MITOCHONDRIAL"/>
    <property type="match status" value="1"/>
</dbReference>
<dbReference type="Pfam" id="PF00006">
    <property type="entry name" value="ATP-synt_ab"/>
    <property type="match status" value="1"/>
</dbReference>
<dbReference type="Pfam" id="PF02874">
    <property type="entry name" value="ATP-synt_ab_N"/>
    <property type="match status" value="1"/>
</dbReference>
<dbReference type="Pfam" id="PF22919">
    <property type="entry name" value="ATP-synt_VA_C"/>
    <property type="match status" value="1"/>
</dbReference>
<dbReference type="SMART" id="SM00382">
    <property type="entry name" value="AAA"/>
    <property type="match status" value="1"/>
</dbReference>
<dbReference type="SUPFAM" id="SSF47917">
    <property type="entry name" value="C-terminal domain of alpha and beta subunits of F1 ATP synthase"/>
    <property type="match status" value="1"/>
</dbReference>
<dbReference type="SUPFAM" id="SSF50615">
    <property type="entry name" value="N-terminal domain of alpha and beta subunits of F1 ATP synthase"/>
    <property type="match status" value="1"/>
</dbReference>
<dbReference type="SUPFAM" id="SSF52540">
    <property type="entry name" value="P-loop containing nucleoside triphosphate hydrolases"/>
    <property type="match status" value="1"/>
</dbReference>
<dbReference type="PROSITE" id="PS00152">
    <property type="entry name" value="ATPASE_ALPHA_BETA"/>
    <property type="match status" value="1"/>
</dbReference>
<name>ATPB_XYLFA</name>
<organism>
    <name type="scientific">Xylella fastidiosa (strain 9a5c)</name>
    <dbReference type="NCBI Taxonomy" id="160492"/>
    <lineage>
        <taxon>Bacteria</taxon>
        <taxon>Pseudomonadati</taxon>
        <taxon>Pseudomonadota</taxon>
        <taxon>Gammaproteobacteria</taxon>
        <taxon>Lysobacterales</taxon>
        <taxon>Lysobacteraceae</taxon>
        <taxon>Xylella</taxon>
    </lineage>
</organism>
<sequence>MNQGKIVQIIGAIVDVEFPRNNVPKVYNALKIDGTAIILEVQQQLGDGIVRTIALGSTDGLKRNLIATDTGHAITVPVGTGTLGRIMDVLGNPIDEAGPITYTDQWEIHRNAPSYEDQASTTELLETGIKVIDLMCPFAKGGKVGLFGGAGVGKTVNMMELINNIAKAHSGLSVFAGVGERTREGNDFYHEMKDSNVLDKVAMVYGQMNEPPGNRLRVALTGLTMAEYFRDEKDSSGKGKDVLLFIDNIYRYTLAGTEVSALLGRMPSAVGYQPTLAEEMGVLQERITSTANGSITSIQAVYVPADDLTDPSPATTFGHLDSTVTLSRSIAALGIYPAVDPLDSSSRQMDPLIIGEEHYNTTQRVQQTLQKYKDLKDIIAILGMDELSEDDKLAVSRARKIERFFSQPFHVAEVFTGAPGKYVPLKETIRGFKAIVDGEYDHLPEQAFYMVGNIEEVIEKANKMTA</sequence>
<accession>Q9PE85</accession>
<reference key="1">
    <citation type="journal article" date="2000" name="Nature">
        <title>The genome sequence of the plant pathogen Xylella fastidiosa.</title>
        <authorList>
            <person name="Simpson A.J.G."/>
            <person name="Reinach F.C."/>
            <person name="Arruda P."/>
            <person name="Abreu F.A."/>
            <person name="Acencio M."/>
            <person name="Alvarenga R."/>
            <person name="Alves L.M.C."/>
            <person name="Araya J.E."/>
            <person name="Baia G.S."/>
            <person name="Baptista C.S."/>
            <person name="Barros M.H."/>
            <person name="Bonaccorsi E.D."/>
            <person name="Bordin S."/>
            <person name="Bove J.M."/>
            <person name="Briones M.R.S."/>
            <person name="Bueno M.R.P."/>
            <person name="Camargo A.A."/>
            <person name="Camargo L.E.A."/>
            <person name="Carraro D.M."/>
            <person name="Carrer H."/>
            <person name="Colauto N.B."/>
            <person name="Colombo C."/>
            <person name="Costa F.F."/>
            <person name="Costa M.C.R."/>
            <person name="Costa-Neto C.M."/>
            <person name="Coutinho L.L."/>
            <person name="Cristofani M."/>
            <person name="Dias-Neto E."/>
            <person name="Docena C."/>
            <person name="El-Dorry H."/>
            <person name="Facincani A.P."/>
            <person name="Ferreira A.J.S."/>
            <person name="Ferreira V.C.A."/>
            <person name="Ferro J.A."/>
            <person name="Fraga J.S."/>
            <person name="Franca S.C."/>
            <person name="Franco M.C."/>
            <person name="Frohme M."/>
            <person name="Furlan L.R."/>
            <person name="Garnier M."/>
            <person name="Goldman G.H."/>
            <person name="Goldman M.H.S."/>
            <person name="Gomes S.L."/>
            <person name="Gruber A."/>
            <person name="Ho P.L."/>
            <person name="Hoheisel J.D."/>
            <person name="Junqueira M.L."/>
            <person name="Kemper E.L."/>
            <person name="Kitajima J.P."/>
            <person name="Krieger J.E."/>
            <person name="Kuramae E.E."/>
            <person name="Laigret F."/>
            <person name="Lambais M.R."/>
            <person name="Leite L.C.C."/>
            <person name="Lemos E.G.M."/>
            <person name="Lemos M.V.F."/>
            <person name="Lopes S.A."/>
            <person name="Lopes C.R."/>
            <person name="Machado J.A."/>
            <person name="Machado M.A."/>
            <person name="Madeira A.M.B.N."/>
            <person name="Madeira H.M.F."/>
            <person name="Marino C.L."/>
            <person name="Marques M.V."/>
            <person name="Martins E.A.L."/>
            <person name="Martins E.M.F."/>
            <person name="Matsukuma A.Y."/>
            <person name="Menck C.F.M."/>
            <person name="Miracca E.C."/>
            <person name="Miyaki C.Y."/>
            <person name="Monteiro-Vitorello C.B."/>
            <person name="Moon D.H."/>
            <person name="Nagai M.A."/>
            <person name="Nascimento A.L.T.O."/>
            <person name="Netto L.E.S."/>
            <person name="Nhani A. Jr."/>
            <person name="Nobrega F.G."/>
            <person name="Nunes L.R."/>
            <person name="Oliveira M.A."/>
            <person name="de Oliveira M.C."/>
            <person name="de Oliveira R.C."/>
            <person name="Palmieri D.A."/>
            <person name="Paris A."/>
            <person name="Peixoto B.R."/>
            <person name="Pereira G.A.G."/>
            <person name="Pereira H.A. Jr."/>
            <person name="Pesquero J.B."/>
            <person name="Quaggio R.B."/>
            <person name="Roberto P.G."/>
            <person name="Rodrigues V."/>
            <person name="de Rosa A.J.M."/>
            <person name="de Rosa V.E. Jr."/>
            <person name="de Sa R.G."/>
            <person name="Santelli R.V."/>
            <person name="Sawasaki H.E."/>
            <person name="da Silva A.C.R."/>
            <person name="da Silva A.M."/>
            <person name="da Silva F.R."/>
            <person name="Silva W.A. Jr."/>
            <person name="da Silveira J.F."/>
            <person name="Silvestri M.L.Z."/>
            <person name="Siqueira W.J."/>
            <person name="de Souza A.A."/>
            <person name="de Souza A.P."/>
            <person name="Terenzi M.F."/>
            <person name="Truffi D."/>
            <person name="Tsai S.M."/>
            <person name="Tsuhako M.H."/>
            <person name="Vallada H."/>
            <person name="Van Sluys M.A."/>
            <person name="Verjovski-Almeida S."/>
            <person name="Vettore A.L."/>
            <person name="Zago M.A."/>
            <person name="Zatz M."/>
            <person name="Meidanis J."/>
            <person name="Setubal J.C."/>
        </authorList>
    </citation>
    <scope>NUCLEOTIDE SEQUENCE [LARGE SCALE GENOMIC DNA]</scope>
    <source>
        <strain>9a5c</strain>
    </source>
</reference>
<keyword id="KW-0066">ATP synthesis</keyword>
<keyword id="KW-0067">ATP-binding</keyword>
<keyword id="KW-0997">Cell inner membrane</keyword>
<keyword id="KW-1003">Cell membrane</keyword>
<keyword id="KW-0139">CF(1)</keyword>
<keyword id="KW-0375">Hydrogen ion transport</keyword>
<keyword id="KW-0406">Ion transport</keyword>
<keyword id="KW-0472">Membrane</keyword>
<keyword id="KW-0547">Nucleotide-binding</keyword>
<keyword id="KW-1278">Translocase</keyword>
<keyword id="KW-0813">Transport</keyword>
<evidence type="ECO:0000255" key="1">
    <source>
        <dbReference type="HAMAP-Rule" id="MF_01347"/>
    </source>
</evidence>
<protein>
    <recommendedName>
        <fullName evidence="1">ATP synthase subunit beta</fullName>
        <ecNumber evidence="1">7.1.2.2</ecNumber>
    </recommendedName>
    <alternativeName>
        <fullName evidence="1">ATP synthase F1 sector subunit beta</fullName>
    </alternativeName>
    <alternativeName>
        <fullName evidence="1">F-ATPase subunit beta</fullName>
    </alternativeName>
</protein>
<feature type="chain" id="PRO_0000254433" description="ATP synthase subunit beta">
    <location>
        <begin position="1"/>
        <end position="466"/>
    </location>
</feature>
<feature type="binding site" evidence="1">
    <location>
        <begin position="148"/>
        <end position="155"/>
    </location>
    <ligand>
        <name>ATP</name>
        <dbReference type="ChEBI" id="CHEBI:30616"/>
    </ligand>
</feature>